<gene>
    <name evidence="1" type="primary">petG</name>
    <name type="ordered locus">GuabCp040</name>
</gene>
<accession>B2LML2</accession>
<evidence type="ECO:0000255" key="1">
    <source>
        <dbReference type="HAMAP-Rule" id="MF_00432"/>
    </source>
</evidence>
<keyword id="KW-0150">Chloroplast</keyword>
<keyword id="KW-0249">Electron transport</keyword>
<keyword id="KW-0472">Membrane</keyword>
<keyword id="KW-0602">Photosynthesis</keyword>
<keyword id="KW-0934">Plastid</keyword>
<keyword id="KW-0793">Thylakoid</keyword>
<keyword id="KW-0812">Transmembrane</keyword>
<keyword id="KW-1133">Transmembrane helix</keyword>
<keyword id="KW-0813">Transport</keyword>
<proteinExistence type="inferred from homology"/>
<protein>
    <recommendedName>
        <fullName evidence="1">Cytochrome b6-f complex subunit 5</fullName>
    </recommendedName>
    <alternativeName>
        <fullName evidence="1">Cytochrome b6-f complex subunit PetG</fullName>
    </alternativeName>
    <alternativeName>
        <fullName evidence="1">Cytochrome b6-f complex subunit V</fullName>
    </alternativeName>
</protein>
<organism>
    <name type="scientific">Guizotia abyssinica</name>
    <name type="common">Niger</name>
    <name type="synonym">Ramtilla</name>
    <dbReference type="NCBI Taxonomy" id="4230"/>
    <lineage>
        <taxon>Eukaryota</taxon>
        <taxon>Viridiplantae</taxon>
        <taxon>Streptophyta</taxon>
        <taxon>Embryophyta</taxon>
        <taxon>Tracheophyta</taxon>
        <taxon>Spermatophyta</taxon>
        <taxon>Magnoliopsida</taxon>
        <taxon>eudicotyledons</taxon>
        <taxon>Gunneridae</taxon>
        <taxon>Pentapetalae</taxon>
        <taxon>asterids</taxon>
        <taxon>campanulids</taxon>
        <taxon>Asterales</taxon>
        <taxon>Asteraceae</taxon>
        <taxon>Asteroideae</taxon>
        <taxon>Heliantheae alliance</taxon>
        <taxon>Millerieae</taxon>
        <taxon>Guizotia</taxon>
    </lineage>
</organism>
<sequence length="37" mass="4170">MIEVFLFGIVLGLIPITLAGLFVTAYLQYRRGDQLDL</sequence>
<comment type="function">
    <text evidence="1">Component of the cytochrome b6-f complex, which mediates electron transfer between photosystem II (PSII) and photosystem I (PSI), cyclic electron flow around PSI, and state transitions. PetG is required for either the stability or assembly of the cytochrome b6-f complex.</text>
</comment>
<comment type="subunit">
    <text evidence="1">The 4 large subunits of the cytochrome b6-f complex are cytochrome b6, subunit IV (17 kDa polypeptide, PetD), cytochrome f and the Rieske protein, while the 4 small subunits are PetG, PetL, PetM and PetN. The complex functions as a dimer.</text>
</comment>
<comment type="subcellular location">
    <subcellularLocation>
        <location evidence="1">Plastid</location>
        <location evidence="1">Chloroplast thylakoid membrane</location>
        <topology evidence="1">Single-pass membrane protein</topology>
    </subcellularLocation>
</comment>
<comment type="similarity">
    <text evidence="1">Belongs to the PetG family.</text>
</comment>
<dbReference type="EMBL" id="EU549769">
    <property type="protein sequence ID" value="ACB86546.1"/>
    <property type="molecule type" value="Genomic_DNA"/>
</dbReference>
<dbReference type="RefSeq" id="YP_001837379.1">
    <property type="nucleotide sequence ID" value="NC_010601.1"/>
</dbReference>
<dbReference type="SMR" id="B2LML2"/>
<dbReference type="GeneID" id="6219176"/>
<dbReference type="GO" id="GO:0009535">
    <property type="term" value="C:chloroplast thylakoid membrane"/>
    <property type="evidence" value="ECO:0007669"/>
    <property type="project" value="UniProtKB-SubCell"/>
</dbReference>
<dbReference type="GO" id="GO:0009512">
    <property type="term" value="C:cytochrome b6f complex"/>
    <property type="evidence" value="ECO:0007669"/>
    <property type="project" value="InterPro"/>
</dbReference>
<dbReference type="GO" id="GO:0045158">
    <property type="term" value="F:electron transporter, transferring electrons within cytochrome b6/f complex of photosystem II activity"/>
    <property type="evidence" value="ECO:0007669"/>
    <property type="project" value="UniProtKB-UniRule"/>
</dbReference>
<dbReference type="GO" id="GO:0017004">
    <property type="term" value="P:cytochrome complex assembly"/>
    <property type="evidence" value="ECO:0007669"/>
    <property type="project" value="UniProtKB-UniRule"/>
</dbReference>
<dbReference type="GO" id="GO:0015979">
    <property type="term" value="P:photosynthesis"/>
    <property type="evidence" value="ECO:0007669"/>
    <property type="project" value="UniProtKB-KW"/>
</dbReference>
<dbReference type="HAMAP" id="MF_00432">
    <property type="entry name" value="Cytb6_f_PetG"/>
    <property type="match status" value="1"/>
</dbReference>
<dbReference type="InterPro" id="IPR003683">
    <property type="entry name" value="Cyt_6/f_cplx_su5"/>
</dbReference>
<dbReference type="InterPro" id="IPR036099">
    <property type="entry name" value="Cyt_6/f_cplx_su5_sf"/>
</dbReference>
<dbReference type="NCBIfam" id="NF001907">
    <property type="entry name" value="PRK00665.1"/>
    <property type="match status" value="1"/>
</dbReference>
<dbReference type="Pfam" id="PF02529">
    <property type="entry name" value="PetG"/>
    <property type="match status" value="1"/>
</dbReference>
<dbReference type="PIRSF" id="PIRSF000034">
    <property type="entry name" value="Cyt_b6-f_V"/>
    <property type="match status" value="1"/>
</dbReference>
<dbReference type="SUPFAM" id="SSF103446">
    <property type="entry name" value="PetG subunit of the cytochrome b6f complex"/>
    <property type="match status" value="1"/>
</dbReference>
<reference key="1">
    <citation type="submission" date="2008-03" db="EMBL/GenBank/DDBJ databases">
        <title>Guizotia abyssinica chloroplast sequenced using Solexa.</title>
        <authorList>
            <person name="Kane N.C."/>
            <person name="Dempewolf H."/>
            <person name="Stewart M.L."/>
            <person name="Cronk Q."/>
            <person name="Rieseberrg L.H."/>
        </authorList>
    </citation>
    <scope>NUCLEOTIDE SEQUENCE [LARGE SCALE GENOMIC DNA]</scope>
    <source>
        <strain>cv. PI 508077</strain>
    </source>
</reference>
<geneLocation type="chloroplast"/>
<feature type="chain" id="PRO_0000355389" description="Cytochrome b6-f complex subunit 5">
    <location>
        <begin position="1"/>
        <end position="37"/>
    </location>
</feature>
<feature type="transmembrane region" description="Helical" evidence="1">
    <location>
        <begin position="5"/>
        <end position="25"/>
    </location>
</feature>
<name>PETG_GUIAB</name>